<reference key="1">
    <citation type="journal article" date="2005" name="J. Bacteriol.">
        <title>Insights on evolution of virulence and resistance from the complete genome analysis of an early methicillin-resistant Staphylococcus aureus strain and a biofilm-producing methicillin-resistant Staphylococcus epidermidis strain.</title>
        <authorList>
            <person name="Gill S.R."/>
            <person name="Fouts D.E."/>
            <person name="Archer G.L."/>
            <person name="Mongodin E.F."/>
            <person name="DeBoy R.T."/>
            <person name="Ravel J."/>
            <person name="Paulsen I.T."/>
            <person name="Kolonay J.F."/>
            <person name="Brinkac L.M."/>
            <person name="Beanan M.J."/>
            <person name="Dodson R.J."/>
            <person name="Daugherty S.C."/>
            <person name="Madupu R."/>
            <person name="Angiuoli S.V."/>
            <person name="Durkin A.S."/>
            <person name="Haft D.H."/>
            <person name="Vamathevan J.J."/>
            <person name="Khouri H."/>
            <person name="Utterback T.R."/>
            <person name="Lee C."/>
            <person name="Dimitrov G."/>
            <person name="Jiang L."/>
            <person name="Qin H."/>
            <person name="Weidman J."/>
            <person name="Tran K."/>
            <person name="Kang K.H."/>
            <person name="Hance I.R."/>
            <person name="Nelson K.E."/>
            <person name="Fraser C.M."/>
        </authorList>
    </citation>
    <scope>NUCLEOTIDE SEQUENCE [LARGE SCALE GENOMIC DNA]</scope>
    <source>
        <strain>COL</strain>
    </source>
</reference>
<keyword id="KW-0378">Hydrolase</keyword>
<keyword id="KW-0460">Magnesium</keyword>
<keyword id="KW-0479">Metal-binding</keyword>
<evidence type="ECO:0000255" key="1">
    <source>
        <dbReference type="HAMAP-Rule" id="MF_01568"/>
    </source>
</evidence>
<dbReference type="EC" id="3.6.1.15" evidence="1"/>
<dbReference type="EC" id="3.6.1.6" evidence="1"/>
<dbReference type="EMBL" id="CP000046">
    <property type="protein sequence ID" value="AAW38366.1"/>
    <property type="molecule type" value="Genomic_DNA"/>
</dbReference>
<dbReference type="RefSeq" id="WP_000251253.1">
    <property type="nucleotide sequence ID" value="NZ_JBGOFO010000006.1"/>
</dbReference>
<dbReference type="SMR" id="Q5HEQ7"/>
<dbReference type="KEGG" id="sac:SACOL1925"/>
<dbReference type="HOGENOM" id="CLU_109787_1_0_9"/>
<dbReference type="Proteomes" id="UP000000530">
    <property type="component" value="Chromosome"/>
</dbReference>
<dbReference type="GO" id="GO:0000287">
    <property type="term" value="F:magnesium ion binding"/>
    <property type="evidence" value="ECO:0007669"/>
    <property type="project" value="UniProtKB-UniRule"/>
</dbReference>
<dbReference type="GO" id="GO:0017110">
    <property type="term" value="F:nucleoside diphosphate phosphatase activity"/>
    <property type="evidence" value="ECO:0007669"/>
    <property type="project" value="UniProtKB-UniRule"/>
</dbReference>
<dbReference type="GO" id="GO:0017111">
    <property type="term" value="F:ribonucleoside triphosphate phosphatase activity"/>
    <property type="evidence" value="ECO:0007669"/>
    <property type="project" value="UniProtKB-UniRule"/>
</dbReference>
<dbReference type="Gene3D" id="2.40.380.10">
    <property type="entry name" value="FomD-like"/>
    <property type="match status" value="1"/>
</dbReference>
<dbReference type="HAMAP" id="MF_01568">
    <property type="entry name" value="Ntdp"/>
    <property type="match status" value="1"/>
</dbReference>
<dbReference type="InterPro" id="IPR007295">
    <property type="entry name" value="DUF402"/>
</dbReference>
<dbReference type="InterPro" id="IPR035930">
    <property type="entry name" value="FomD-like_sf"/>
</dbReference>
<dbReference type="InterPro" id="IPR050212">
    <property type="entry name" value="Ntdp-like"/>
</dbReference>
<dbReference type="InterPro" id="IPR016882">
    <property type="entry name" value="SA1684"/>
</dbReference>
<dbReference type="NCBIfam" id="NF010183">
    <property type="entry name" value="PRK13662.1"/>
    <property type="match status" value="1"/>
</dbReference>
<dbReference type="PANTHER" id="PTHR39159">
    <property type="match status" value="1"/>
</dbReference>
<dbReference type="PANTHER" id="PTHR39159:SF1">
    <property type="entry name" value="UPF0374 PROTEIN YGAC"/>
    <property type="match status" value="1"/>
</dbReference>
<dbReference type="Pfam" id="PF04167">
    <property type="entry name" value="DUF402"/>
    <property type="match status" value="1"/>
</dbReference>
<dbReference type="PIRSF" id="PIRSF028345">
    <property type="entry name" value="UCP028345"/>
    <property type="match status" value="1"/>
</dbReference>
<dbReference type="SUPFAM" id="SSF159234">
    <property type="entry name" value="FomD-like"/>
    <property type="match status" value="1"/>
</dbReference>
<feature type="chain" id="PRO_0000248107" description="Nucleoside triphosphate/diphosphate phosphatase">
    <location>
        <begin position="1"/>
        <end position="180"/>
    </location>
</feature>
<feature type="active site" description="Proton donor" evidence="1">
    <location>
        <position position="26"/>
    </location>
</feature>
<feature type="binding site" evidence="1">
    <location>
        <position position="90"/>
    </location>
    <ligand>
        <name>Mg(2+)</name>
        <dbReference type="ChEBI" id="CHEBI:18420"/>
        <label>1</label>
    </ligand>
</feature>
<feature type="binding site" evidence="1">
    <location>
        <position position="106"/>
    </location>
    <ligand>
        <name>Mg(2+)</name>
        <dbReference type="ChEBI" id="CHEBI:18420"/>
        <label>1</label>
    </ligand>
</feature>
<feature type="binding site" evidence="1">
    <location>
        <position position="108"/>
    </location>
    <ligand>
        <name>Mg(2+)</name>
        <dbReference type="ChEBI" id="CHEBI:18420"/>
        <label>2</label>
    </ligand>
</feature>
<feature type="binding site" evidence="1">
    <location>
        <position position="110"/>
    </location>
    <ligand>
        <name>Mg(2+)</name>
        <dbReference type="ChEBI" id="CHEBI:18420"/>
        <label>1</label>
    </ligand>
</feature>
<feature type="binding site" evidence="1">
    <location>
        <position position="110"/>
    </location>
    <ligand>
        <name>Mg(2+)</name>
        <dbReference type="ChEBI" id="CHEBI:18420"/>
        <label>2</label>
    </ligand>
</feature>
<feature type="binding site" evidence="1">
    <location>
        <position position="123"/>
    </location>
    <ligand>
        <name>Mg(2+)</name>
        <dbReference type="ChEBI" id="CHEBI:18420"/>
        <label>2</label>
    </ligand>
</feature>
<feature type="binding site" evidence="1">
    <location>
        <position position="126"/>
    </location>
    <ligand>
        <name>Mg(2+)</name>
        <dbReference type="ChEBI" id="CHEBI:18420"/>
        <label>2</label>
    </ligand>
</feature>
<organism>
    <name type="scientific">Staphylococcus aureus (strain COL)</name>
    <dbReference type="NCBI Taxonomy" id="93062"/>
    <lineage>
        <taxon>Bacteria</taxon>
        <taxon>Bacillati</taxon>
        <taxon>Bacillota</taxon>
        <taxon>Bacilli</taxon>
        <taxon>Bacillales</taxon>
        <taxon>Staphylococcaceae</taxon>
        <taxon>Staphylococcus</taxon>
    </lineage>
</organism>
<gene>
    <name type="ordered locus">SACOL1925</name>
</gene>
<name>NTDP_STAAC</name>
<proteinExistence type="inferred from homology"/>
<sequence>MVRESIPKEGENIKIQSYKHDGKIHRVWSETTILKGTDHVVIGGNDHTLVTESDGRTWITREPAIVYFHSEYWFNVICMFREDGIYYYCNLSSPFVCDEEALKYIDYDLDIKVYPNGKYHLLDEDEYEQHMNQMNYPHDIDIILRRNVDILQQWIEQKKGPFAPDFIKVWKERYKKIRQY</sequence>
<comment type="function">
    <text evidence="1">Has nucleoside phosphatase activity towards nucleoside triphosphates and nucleoside diphosphates.</text>
</comment>
<comment type="catalytic activity">
    <reaction evidence="1">
        <text>a ribonucleoside 5'-triphosphate + H2O = a ribonucleoside 5'-diphosphate + phosphate + H(+)</text>
        <dbReference type="Rhea" id="RHEA:23680"/>
        <dbReference type="ChEBI" id="CHEBI:15377"/>
        <dbReference type="ChEBI" id="CHEBI:15378"/>
        <dbReference type="ChEBI" id="CHEBI:43474"/>
        <dbReference type="ChEBI" id="CHEBI:57930"/>
        <dbReference type="ChEBI" id="CHEBI:61557"/>
        <dbReference type="EC" id="3.6.1.15"/>
    </reaction>
</comment>
<comment type="catalytic activity">
    <reaction evidence="1">
        <text>a ribonucleoside 5'-diphosphate + H2O = a ribonucleoside 5'-phosphate + phosphate + H(+)</text>
        <dbReference type="Rhea" id="RHEA:36799"/>
        <dbReference type="ChEBI" id="CHEBI:15377"/>
        <dbReference type="ChEBI" id="CHEBI:15378"/>
        <dbReference type="ChEBI" id="CHEBI:43474"/>
        <dbReference type="ChEBI" id="CHEBI:57930"/>
        <dbReference type="ChEBI" id="CHEBI:58043"/>
        <dbReference type="EC" id="3.6.1.6"/>
    </reaction>
</comment>
<comment type="cofactor">
    <cofactor evidence="1">
        <name>Mg(2+)</name>
        <dbReference type="ChEBI" id="CHEBI:18420"/>
    </cofactor>
</comment>
<comment type="similarity">
    <text evidence="1">Belongs to the Ntdp family.</text>
</comment>
<accession>Q5HEQ7</accession>
<protein>
    <recommendedName>
        <fullName evidence="1">Nucleoside triphosphate/diphosphate phosphatase</fullName>
        <ecNumber evidence="1">3.6.1.15</ecNumber>
        <ecNumber evidence="1">3.6.1.6</ecNumber>
    </recommendedName>
</protein>